<sequence>MSFYVVVPARYASTRLPGKPLADIAGKTMVERVAQRCQQSDADQIYVATDDRRIADVLGDTVPVVMTREDHPSGTDRLQEVATKLALADDDIIVNVQGDEPLIPPAVINQVAANLAANPDCQMATLCEAIENSDDLFNPNVVKAVFDNRGKALYFSRAPVPWHRDAFADGQQDLSGGQWWRHIGIYAYRVAFLHQYVQWQPATLEKLESLEQLRAMANGVAIHVEPACEVVPGGVDTQTDLERLRAQLGGQ</sequence>
<accession>Q0VQP3</accession>
<evidence type="ECO:0000255" key="1">
    <source>
        <dbReference type="HAMAP-Rule" id="MF_00057"/>
    </source>
</evidence>
<reference key="1">
    <citation type="journal article" date="2006" name="Nat. Biotechnol.">
        <title>Genome sequence of the ubiquitous hydrocarbon-degrading marine bacterium Alcanivorax borkumensis.</title>
        <authorList>
            <person name="Schneiker S."/>
            <person name="Martins dos Santos V.A.P."/>
            <person name="Bartels D."/>
            <person name="Bekel T."/>
            <person name="Brecht M."/>
            <person name="Buhrmester J."/>
            <person name="Chernikova T.N."/>
            <person name="Denaro R."/>
            <person name="Ferrer M."/>
            <person name="Gertler C."/>
            <person name="Goesmann A."/>
            <person name="Golyshina O.V."/>
            <person name="Kaminski F."/>
            <person name="Khachane A.N."/>
            <person name="Lang S."/>
            <person name="Linke B."/>
            <person name="McHardy A.C."/>
            <person name="Meyer F."/>
            <person name="Nechitaylo T."/>
            <person name="Puehler A."/>
            <person name="Regenhardt D."/>
            <person name="Rupp O."/>
            <person name="Sabirova J.S."/>
            <person name="Selbitschka W."/>
            <person name="Yakimov M.M."/>
            <person name="Timmis K.N."/>
            <person name="Vorhoelter F.-J."/>
            <person name="Weidner S."/>
            <person name="Kaiser O."/>
            <person name="Golyshin P.N."/>
        </authorList>
    </citation>
    <scope>NUCLEOTIDE SEQUENCE [LARGE SCALE GENOMIC DNA]</scope>
    <source>
        <strain>ATCC 700651 / DSM 11573 / NCIMB 13689 / SK2</strain>
    </source>
</reference>
<dbReference type="EC" id="2.7.7.38" evidence="1"/>
<dbReference type="EMBL" id="AM286690">
    <property type="protein sequence ID" value="CAL16505.1"/>
    <property type="molecule type" value="Genomic_DNA"/>
</dbReference>
<dbReference type="RefSeq" id="WP_011588341.1">
    <property type="nucleotide sequence ID" value="NC_008260.1"/>
</dbReference>
<dbReference type="SMR" id="Q0VQP3"/>
<dbReference type="STRING" id="393595.ABO_1057"/>
<dbReference type="KEGG" id="abo:ABO_1057"/>
<dbReference type="eggNOG" id="COG1212">
    <property type="taxonomic scope" value="Bacteria"/>
</dbReference>
<dbReference type="HOGENOM" id="CLU_065038_1_0_6"/>
<dbReference type="OrthoDB" id="9815559at2"/>
<dbReference type="UniPathway" id="UPA00030"/>
<dbReference type="UniPathway" id="UPA00358">
    <property type="reaction ID" value="UER00476"/>
</dbReference>
<dbReference type="Proteomes" id="UP000008871">
    <property type="component" value="Chromosome"/>
</dbReference>
<dbReference type="GO" id="GO:0005829">
    <property type="term" value="C:cytosol"/>
    <property type="evidence" value="ECO:0007669"/>
    <property type="project" value="TreeGrafter"/>
</dbReference>
<dbReference type="GO" id="GO:0008690">
    <property type="term" value="F:3-deoxy-manno-octulosonate cytidylyltransferase activity"/>
    <property type="evidence" value="ECO:0007669"/>
    <property type="project" value="UniProtKB-UniRule"/>
</dbReference>
<dbReference type="GO" id="GO:0033468">
    <property type="term" value="P:CMP-keto-3-deoxy-D-manno-octulosonic acid biosynthetic process"/>
    <property type="evidence" value="ECO:0007669"/>
    <property type="project" value="UniProtKB-UniRule"/>
</dbReference>
<dbReference type="GO" id="GO:0009103">
    <property type="term" value="P:lipopolysaccharide biosynthetic process"/>
    <property type="evidence" value="ECO:0007669"/>
    <property type="project" value="UniProtKB-UniRule"/>
</dbReference>
<dbReference type="CDD" id="cd02517">
    <property type="entry name" value="CMP-KDO-Synthetase"/>
    <property type="match status" value="1"/>
</dbReference>
<dbReference type="FunFam" id="3.90.550.10:FF:000011">
    <property type="entry name" value="3-deoxy-manno-octulosonate cytidylyltransferase"/>
    <property type="match status" value="1"/>
</dbReference>
<dbReference type="Gene3D" id="3.90.550.10">
    <property type="entry name" value="Spore Coat Polysaccharide Biosynthesis Protein SpsA, Chain A"/>
    <property type="match status" value="1"/>
</dbReference>
<dbReference type="HAMAP" id="MF_00057">
    <property type="entry name" value="KdsB"/>
    <property type="match status" value="1"/>
</dbReference>
<dbReference type="InterPro" id="IPR003329">
    <property type="entry name" value="Cytidylyl_trans"/>
</dbReference>
<dbReference type="InterPro" id="IPR004528">
    <property type="entry name" value="KdsB"/>
</dbReference>
<dbReference type="InterPro" id="IPR029044">
    <property type="entry name" value="Nucleotide-diphossugar_trans"/>
</dbReference>
<dbReference type="NCBIfam" id="TIGR00466">
    <property type="entry name" value="kdsB"/>
    <property type="match status" value="1"/>
</dbReference>
<dbReference type="NCBIfam" id="NF003950">
    <property type="entry name" value="PRK05450.1-3"/>
    <property type="match status" value="1"/>
</dbReference>
<dbReference type="NCBIfam" id="NF003952">
    <property type="entry name" value="PRK05450.1-5"/>
    <property type="match status" value="1"/>
</dbReference>
<dbReference type="NCBIfam" id="NF009905">
    <property type="entry name" value="PRK13368.1"/>
    <property type="match status" value="1"/>
</dbReference>
<dbReference type="PANTHER" id="PTHR42866">
    <property type="entry name" value="3-DEOXY-MANNO-OCTULOSONATE CYTIDYLYLTRANSFERASE"/>
    <property type="match status" value="1"/>
</dbReference>
<dbReference type="PANTHER" id="PTHR42866:SF2">
    <property type="entry name" value="3-DEOXY-MANNO-OCTULOSONATE CYTIDYLYLTRANSFERASE, MITOCHONDRIAL"/>
    <property type="match status" value="1"/>
</dbReference>
<dbReference type="Pfam" id="PF02348">
    <property type="entry name" value="CTP_transf_3"/>
    <property type="match status" value="1"/>
</dbReference>
<dbReference type="SUPFAM" id="SSF53448">
    <property type="entry name" value="Nucleotide-diphospho-sugar transferases"/>
    <property type="match status" value="1"/>
</dbReference>
<protein>
    <recommendedName>
        <fullName evidence="1">3-deoxy-manno-octulosonate cytidylyltransferase</fullName>
        <ecNumber evidence="1">2.7.7.38</ecNumber>
    </recommendedName>
    <alternativeName>
        <fullName evidence="1">CMP-2-keto-3-deoxyoctulosonic acid synthase</fullName>
        <shortName evidence="1">CKS</shortName>
        <shortName evidence="1">CMP-KDO synthase</shortName>
    </alternativeName>
</protein>
<feature type="chain" id="PRO_1000091853" description="3-deoxy-manno-octulosonate cytidylyltransferase">
    <location>
        <begin position="1"/>
        <end position="251"/>
    </location>
</feature>
<proteinExistence type="inferred from homology"/>
<name>KDSB_ALCBS</name>
<comment type="function">
    <text evidence="1">Activates KDO (a required 8-carbon sugar) for incorporation into bacterial lipopolysaccharide in Gram-negative bacteria.</text>
</comment>
<comment type="catalytic activity">
    <reaction evidence="1">
        <text>3-deoxy-alpha-D-manno-oct-2-ulosonate + CTP = CMP-3-deoxy-beta-D-manno-octulosonate + diphosphate</text>
        <dbReference type="Rhea" id="RHEA:23448"/>
        <dbReference type="ChEBI" id="CHEBI:33019"/>
        <dbReference type="ChEBI" id="CHEBI:37563"/>
        <dbReference type="ChEBI" id="CHEBI:85986"/>
        <dbReference type="ChEBI" id="CHEBI:85987"/>
        <dbReference type="EC" id="2.7.7.38"/>
    </reaction>
</comment>
<comment type="pathway">
    <text evidence="1">Nucleotide-sugar biosynthesis; CMP-3-deoxy-D-manno-octulosonate biosynthesis; CMP-3-deoxy-D-manno-octulosonate from 3-deoxy-D-manno-octulosonate and CTP: step 1/1.</text>
</comment>
<comment type="pathway">
    <text evidence="1">Bacterial outer membrane biogenesis; lipopolysaccharide biosynthesis.</text>
</comment>
<comment type="subcellular location">
    <subcellularLocation>
        <location evidence="1">Cytoplasm</location>
    </subcellularLocation>
</comment>
<comment type="similarity">
    <text evidence="1">Belongs to the KdsB family.</text>
</comment>
<organism>
    <name type="scientific">Alcanivorax borkumensis (strain ATCC 700651 / DSM 11573 / NCIMB 13689 / SK2)</name>
    <dbReference type="NCBI Taxonomy" id="393595"/>
    <lineage>
        <taxon>Bacteria</taxon>
        <taxon>Pseudomonadati</taxon>
        <taxon>Pseudomonadota</taxon>
        <taxon>Gammaproteobacteria</taxon>
        <taxon>Oceanospirillales</taxon>
        <taxon>Alcanivoracaceae</taxon>
        <taxon>Alcanivorax</taxon>
    </lineage>
</organism>
<gene>
    <name evidence="1" type="primary">kdsB</name>
    <name type="ordered locus">ABO_1057</name>
</gene>
<keyword id="KW-0963">Cytoplasm</keyword>
<keyword id="KW-0448">Lipopolysaccharide biosynthesis</keyword>
<keyword id="KW-0548">Nucleotidyltransferase</keyword>
<keyword id="KW-1185">Reference proteome</keyword>
<keyword id="KW-0808">Transferase</keyword>